<reference key="1">
    <citation type="journal article" date="1993" name="PCR Methods Appl.">
        <title>PCR amplification of SRY-related gene sequences reveals evolutionary conservation of the SRY-box motif.</title>
        <authorList>
            <person name="Coriat A.M."/>
            <person name="Mueller U."/>
            <person name="Harry J.L."/>
            <person name="Uwanogho D."/>
            <person name="Sharpe P.T."/>
        </authorList>
    </citation>
    <scope>NUCLEOTIDE SEQUENCE [GENOMIC DNA]</scope>
    <source>
        <tissue>Blood</tissue>
    </source>
</reference>
<keyword id="KW-0238">DNA-binding</keyword>
<keyword id="KW-0539">Nucleus</keyword>
<keyword id="KW-1185">Reference proteome</keyword>
<dbReference type="EMBL" id="M86321">
    <property type="protein sequence ID" value="AAA48678.1"/>
    <property type="molecule type" value="Genomic_DNA"/>
</dbReference>
<dbReference type="PIR" id="I50191">
    <property type="entry name" value="I50191"/>
</dbReference>
<dbReference type="SMR" id="P40666"/>
<dbReference type="FunCoup" id="P40666">
    <property type="interactions" value="6"/>
</dbReference>
<dbReference type="InParanoid" id="P40666"/>
<dbReference type="Proteomes" id="UP000000539">
    <property type="component" value="Unassembled WGS sequence"/>
</dbReference>
<dbReference type="GO" id="GO:0005634">
    <property type="term" value="C:nucleus"/>
    <property type="evidence" value="ECO:0007669"/>
    <property type="project" value="UniProtKB-SubCell"/>
</dbReference>
<dbReference type="GO" id="GO:0003677">
    <property type="term" value="F:DNA binding"/>
    <property type="evidence" value="ECO:0007669"/>
    <property type="project" value="UniProtKB-KW"/>
</dbReference>
<dbReference type="GO" id="GO:0032502">
    <property type="term" value="P:developmental process"/>
    <property type="evidence" value="ECO:0007669"/>
    <property type="project" value="UniProtKB-ARBA"/>
</dbReference>
<dbReference type="FunFam" id="1.10.30.10:FF:000074">
    <property type="entry name" value="SRY-related protein AMA1"/>
    <property type="match status" value="1"/>
</dbReference>
<dbReference type="Gene3D" id="1.10.30.10">
    <property type="entry name" value="High mobility group box domain"/>
    <property type="match status" value="1"/>
</dbReference>
<dbReference type="InterPro" id="IPR009071">
    <property type="entry name" value="HMG_box_dom"/>
</dbReference>
<dbReference type="InterPro" id="IPR036910">
    <property type="entry name" value="HMG_box_dom_sf"/>
</dbReference>
<dbReference type="InterPro" id="IPR050140">
    <property type="entry name" value="SRY-related_HMG-box_TF-like"/>
</dbReference>
<dbReference type="PANTHER" id="PTHR10270">
    <property type="entry name" value="SOX TRANSCRIPTION FACTOR"/>
    <property type="match status" value="1"/>
</dbReference>
<dbReference type="PANTHER" id="PTHR10270:SF231">
    <property type="entry name" value="TRANSCRIPTION FACTOR SOX-2"/>
    <property type="match status" value="1"/>
</dbReference>
<dbReference type="Pfam" id="PF00505">
    <property type="entry name" value="HMG_box"/>
    <property type="match status" value="1"/>
</dbReference>
<dbReference type="SMART" id="SM00398">
    <property type="entry name" value="HMG"/>
    <property type="match status" value="1"/>
</dbReference>
<dbReference type="SUPFAM" id="SSF47095">
    <property type="entry name" value="HMG-box"/>
    <property type="match status" value="1"/>
</dbReference>
<dbReference type="PROSITE" id="PS50118">
    <property type="entry name" value="HMG_BOX_2"/>
    <property type="match status" value="1"/>
</dbReference>
<comment type="subcellular location">
    <subcellularLocation>
        <location evidence="1">Nucleus</location>
    </subcellularLocation>
</comment>
<sequence>MAQENPKMHNSEMSKRLGAEWKLLSEAEKRPFIDEAKRLRASHMKEYPDYKYRP</sequence>
<feature type="chain" id="PRO_0000048780" description="SRY-related protein CH2">
    <location>
        <begin position="1" status="less than"/>
        <end position="54" status="greater than"/>
    </location>
</feature>
<feature type="DNA-binding region" description="HMG box" evidence="1">
    <location>
        <begin position="1" status="less than"/>
        <end position="54" status="greater than"/>
    </location>
</feature>
<feature type="non-terminal residue">
    <location>
        <position position="1"/>
    </location>
</feature>
<feature type="non-terminal residue">
    <location>
        <position position="54"/>
    </location>
</feature>
<name>CH02_CHICK</name>
<protein>
    <recommendedName>
        <fullName>SRY-related protein CH2</fullName>
    </recommendedName>
</protein>
<proteinExistence type="inferred from homology"/>
<accession>P40666</accession>
<organism>
    <name type="scientific">Gallus gallus</name>
    <name type="common">Chicken</name>
    <dbReference type="NCBI Taxonomy" id="9031"/>
    <lineage>
        <taxon>Eukaryota</taxon>
        <taxon>Metazoa</taxon>
        <taxon>Chordata</taxon>
        <taxon>Craniata</taxon>
        <taxon>Vertebrata</taxon>
        <taxon>Euteleostomi</taxon>
        <taxon>Archelosauria</taxon>
        <taxon>Archosauria</taxon>
        <taxon>Dinosauria</taxon>
        <taxon>Saurischia</taxon>
        <taxon>Theropoda</taxon>
        <taxon>Coelurosauria</taxon>
        <taxon>Aves</taxon>
        <taxon>Neognathae</taxon>
        <taxon>Galloanserae</taxon>
        <taxon>Galliformes</taxon>
        <taxon>Phasianidae</taxon>
        <taxon>Phasianinae</taxon>
        <taxon>Gallus</taxon>
    </lineage>
</organism>
<evidence type="ECO:0000255" key="1">
    <source>
        <dbReference type="PROSITE-ProRule" id="PRU00267"/>
    </source>
</evidence>